<reference key="1">
    <citation type="journal article" date="2007" name="PLoS Genet.">
        <title>Patterns and implications of gene gain and loss in the evolution of Prochlorococcus.</title>
        <authorList>
            <person name="Kettler G.C."/>
            <person name="Martiny A.C."/>
            <person name="Huang K."/>
            <person name="Zucker J."/>
            <person name="Coleman M.L."/>
            <person name="Rodrigue S."/>
            <person name="Chen F."/>
            <person name="Lapidus A."/>
            <person name="Ferriera S."/>
            <person name="Johnson J."/>
            <person name="Steglich C."/>
            <person name="Church G.M."/>
            <person name="Richardson P."/>
            <person name="Chisholm S.W."/>
        </authorList>
    </citation>
    <scope>NUCLEOTIDE SEQUENCE [LARGE SCALE GENOMIC DNA]</scope>
    <source>
        <strain>MIT 9211</strain>
    </source>
</reference>
<feature type="chain" id="PRO_1000115089" description="Protein PsbN">
    <location>
        <begin position="1"/>
        <end position="46"/>
    </location>
</feature>
<feature type="transmembrane region" description="Helical" evidence="1">
    <location>
        <begin position="10"/>
        <end position="30"/>
    </location>
</feature>
<organism>
    <name type="scientific">Prochlorococcus marinus (strain MIT 9211)</name>
    <dbReference type="NCBI Taxonomy" id="93059"/>
    <lineage>
        <taxon>Bacteria</taxon>
        <taxon>Bacillati</taxon>
        <taxon>Cyanobacteriota</taxon>
        <taxon>Cyanophyceae</taxon>
        <taxon>Synechococcales</taxon>
        <taxon>Prochlorococcaceae</taxon>
        <taxon>Prochlorococcus</taxon>
    </lineage>
</organism>
<gene>
    <name evidence="1" type="primary">psbN</name>
    <name type="ordered locus">P9211_02781</name>
</gene>
<name>PSBN_PROM4</name>
<accession>A9BDM3</accession>
<protein>
    <recommendedName>
        <fullName evidence="1">Protein PsbN</fullName>
    </recommendedName>
</protein>
<keyword id="KW-0472">Membrane</keyword>
<keyword id="KW-1185">Reference proteome</keyword>
<keyword id="KW-0793">Thylakoid</keyword>
<keyword id="KW-0812">Transmembrane</keyword>
<keyword id="KW-1133">Transmembrane helix</keyword>
<proteinExistence type="inferred from homology"/>
<comment type="function">
    <text evidence="1">May play a role in photosystem I and II biogenesis.</text>
</comment>
<comment type="subcellular location">
    <subcellularLocation>
        <location evidence="1">Cellular thylakoid membrane</location>
        <topology evidence="1">Single-pass membrane protein</topology>
    </subcellularLocation>
</comment>
<comment type="similarity">
    <text evidence="1">Belongs to the PsbN family.</text>
</comment>
<comment type="caution">
    <text evidence="1">Originally thought to be a component of PSII; based on experiments in Synechocystis, N.tabacum and barley, and its absence from PSII in T.elongatus and T.vulcanus, this is probably not true.</text>
</comment>
<dbReference type="EMBL" id="CP000878">
    <property type="protein sequence ID" value="ABX08209.1"/>
    <property type="molecule type" value="Genomic_DNA"/>
</dbReference>
<dbReference type="RefSeq" id="WP_012194834.1">
    <property type="nucleotide sequence ID" value="NC_009976.1"/>
</dbReference>
<dbReference type="SMR" id="A9BDM3"/>
<dbReference type="STRING" id="93059.P9211_02781"/>
<dbReference type="KEGG" id="pmj:P9211_02781"/>
<dbReference type="eggNOG" id="ENOG5030PNS">
    <property type="taxonomic scope" value="Bacteria"/>
</dbReference>
<dbReference type="HOGENOM" id="CLU_205504_1_0_3"/>
<dbReference type="Proteomes" id="UP000000788">
    <property type="component" value="Chromosome"/>
</dbReference>
<dbReference type="GO" id="GO:0031676">
    <property type="term" value="C:plasma membrane-derived thylakoid membrane"/>
    <property type="evidence" value="ECO:0007669"/>
    <property type="project" value="UniProtKB-SubCell"/>
</dbReference>
<dbReference type="GO" id="GO:0015979">
    <property type="term" value="P:photosynthesis"/>
    <property type="evidence" value="ECO:0007669"/>
    <property type="project" value="InterPro"/>
</dbReference>
<dbReference type="HAMAP" id="MF_00293">
    <property type="entry name" value="PSII_PsbN"/>
    <property type="match status" value="1"/>
</dbReference>
<dbReference type="InterPro" id="IPR003398">
    <property type="entry name" value="PSII_PsbN"/>
</dbReference>
<dbReference type="NCBIfam" id="NF009650">
    <property type="entry name" value="PRK13183.1"/>
    <property type="match status" value="1"/>
</dbReference>
<dbReference type="Pfam" id="PF02468">
    <property type="entry name" value="PsbN"/>
    <property type="match status" value="1"/>
</dbReference>
<evidence type="ECO:0000255" key="1">
    <source>
        <dbReference type="HAMAP-Rule" id="MF_00293"/>
    </source>
</evidence>
<sequence length="46" mass="4857">METSSLALQLAIIVLVVLLGLTGLGVYMAFGPAAKGLDDPWDEHDD</sequence>